<protein>
    <recommendedName>
        <fullName evidence="1">Ribosomal RNA large subunit methyltransferase F</fullName>
        <ecNumber evidence="1">2.1.1.181</ecNumber>
    </recommendedName>
    <alternativeName>
        <fullName evidence="1">23S rRNA mA1618 methyltransferase</fullName>
    </alternativeName>
    <alternativeName>
        <fullName evidence="1">rRNA adenine N-6-methyltransferase</fullName>
    </alternativeName>
</protein>
<accession>Q87Q26</accession>
<sequence>MKNNSHNAKQAPSKAAKPKHDNDVNKAKPKRVKKKAAVKAKLSAEKSDVDFIKIAKSGLHESNAHRGRYDFKKLIASEPALASFVIKNPKGEDSINFSDPNAVKMLNKALLAAYYNIDFWDIPEHYLCPPIPGRADYIHRVAELLDGEVKGKYRHQNVRALDVGVGANCIYPIVGVTQYGWHYTGSDVDPKSIDSAANIVERNVALNGKIELVQQMSESHIYRGVIKPNDRFDVTTCNPPFHRSAEDAAMGSQRKLDNLKANQRKKGVKQQNSPVKQGKPTLNFGGQNAELWCEGGEAAFIRRMANESQAFSSQVLWFTTLISKKDNVRPMRKQLEKLGVKAIRVVEMSQGQKISRFMAWSFMDKQQRKTWIELK</sequence>
<proteinExistence type="inferred from homology"/>
<organism>
    <name type="scientific">Vibrio parahaemolyticus serotype O3:K6 (strain RIMD 2210633)</name>
    <dbReference type="NCBI Taxonomy" id="223926"/>
    <lineage>
        <taxon>Bacteria</taxon>
        <taxon>Pseudomonadati</taxon>
        <taxon>Pseudomonadota</taxon>
        <taxon>Gammaproteobacteria</taxon>
        <taxon>Vibrionales</taxon>
        <taxon>Vibrionaceae</taxon>
        <taxon>Vibrio</taxon>
    </lineage>
</organism>
<keyword id="KW-0963">Cytoplasm</keyword>
<keyword id="KW-0489">Methyltransferase</keyword>
<keyword id="KW-0698">rRNA processing</keyword>
<keyword id="KW-0949">S-adenosyl-L-methionine</keyword>
<keyword id="KW-0808">Transferase</keyword>
<name>RLMF_VIBPA</name>
<gene>
    <name evidence="1" type="primary">rlmF</name>
    <name type="ordered locus">VP1324</name>
</gene>
<comment type="function">
    <text evidence="1">Specifically methylates the adenine in position 1618 of 23S rRNA.</text>
</comment>
<comment type="catalytic activity">
    <reaction evidence="1">
        <text>adenosine(1618) in 23S rRNA + S-adenosyl-L-methionine = N(6)-methyladenosine(1618) in 23S rRNA + S-adenosyl-L-homocysteine + H(+)</text>
        <dbReference type="Rhea" id="RHEA:16497"/>
        <dbReference type="Rhea" id="RHEA-COMP:10229"/>
        <dbReference type="Rhea" id="RHEA-COMP:10231"/>
        <dbReference type="ChEBI" id="CHEBI:15378"/>
        <dbReference type="ChEBI" id="CHEBI:57856"/>
        <dbReference type="ChEBI" id="CHEBI:59789"/>
        <dbReference type="ChEBI" id="CHEBI:74411"/>
        <dbReference type="ChEBI" id="CHEBI:74449"/>
        <dbReference type="EC" id="2.1.1.181"/>
    </reaction>
</comment>
<comment type="subcellular location">
    <subcellularLocation>
        <location evidence="1">Cytoplasm</location>
    </subcellularLocation>
</comment>
<comment type="similarity">
    <text evidence="1">Belongs to the methyltransferase superfamily. METTL16/RlmF family.</text>
</comment>
<evidence type="ECO:0000255" key="1">
    <source>
        <dbReference type="HAMAP-Rule" id="MF_01848"/>
    </source>
</evidence>
<evidence type="ECO:0000256" key="2">
    <source>
        <dbReference type="SAM" id="MobiDB-lite"/>
    </source>
</evidence>
<reference key="1">
    <citation type="journal article" date="2003" name="Lancet">
        <title>Genome sequence of Vibrio parahaemolyticus: a pathogenic mechanism distinct from that of V. cholerae.</title>
        <authorList>
            <person name="Makino K."/>
            <person name="Oshima K."/>
            <person name="Kurokawa K."/>
            <person name="Yokoyama K."/>
            <person name="Uda T."/>
            <person name="Tagomori K."/>
            <person name="Iijima Y."/>
            <person name="Najima M."/>
            <person name="Nakano M."/>
            <person name="Yamashita A."/>
            <person name="Kubota Y."/>
            <person name="Kimura S."/>
            <person name="Yasunaga T."/>
            <person name="Honda T."/>
            <person name="Shinagawa H."/>
            <person name="Hattori M."/>
            <person name="Iida T."/>
        </authorList>
    </citation>
    <scope>NUCLEOTIDE SEQUENCE [LARGE SCALE GENOMIC DNA]</scope>
    <source>
        <strain>RIMD 2210633</strain>
    </source>
</reference>
<dbReference type="EC" id="2.1.1.181" evidence="1"/>
<dbReference type="EMBL" id="BA000031">
    <property type="protein sequence ID" value="BAC59587.1"/>
    <property type="molecule type" value="Genomic_DNA"/>
</dbReference>
<dbReference type="RefSeq" id="NP_797703.1">
    <property type="nucleotide sequence ID" value="NC_004603.1"/>
</dbReference>
<dbReference type="RefSeq" id="WP_005454860.1">
    <property type="nucleotide sequence ID" value="NC_004603.1"/>
</dbReference>
<dbReference type="SMR" id="Q87Q26"/>
<dbReference type="GeneID" id="1188829"/>
<dbReference type="KEGG" id="vpa:VP1324"/>
<dbReference type="PATRIC" id="fig|223926.6.peg.1266"/>
<dbReference type="eggNOG" id="COG3129">
    <property type="taxonomic scope" value="Bacteria"/>
</dbReference>
<dbReference type="HOGENOM" id="CLU_027534_3_0_6"/>
<dbReference type="Proteomes" id="UP000002493">
    <property type="component" value="Chromosome 1"/>
</dbReference>
<dbReference type="GO" id="GO:0005737">
    <property type="term" value="C:cytoplasm"/>
    <property type="evidence" value="ECO:0007669"/>
    <property type="project" value="UniProtKB-SubCell"/>
</dbReference>
<dbReference type="GO" id="GO:0052907">
    <property type="term" value="F:23S rRNA (adenine(1618)-N(6))-methyltransferase activity"/>
    <property type="evidence" value="ECO:0007669"/>
    <property type="project" value="UniProtKB-EC"/>
</dbReference>
<dbReference type="GO" id="GO:0070475">
    <property type="term" value="P:rRNA base methylation"/>
    <property type="evidence" value="ECO:0007669"/>
    <property type="project" value="TreeGrafter"/>
</dbReference>
<dbReference type="CDD" id="cd02440">
    <property type="entry name" value="AdoMet_MTases"/>
    <property type="match status" value="1"/>
</dbReference>
<dbReference type="Gene3D" id="3.40.50.150">
    <property type="entry name" value="Vaccinia Virus protein VP39"/>
    <property type="match status" value="1"/>
</dbReference>
<dbReference type="HAMAP" id="MF_01848">
    <property type="entry name" value="23SrRNA_methyltr_F"/>
    <property type="match status" value="1"/>
</dbReference>
<dbReference type="InterPro" id="IPR010286">
    <property type="entry name" value="METTL16/RlmF"/>
</dbReference>
<dbReference type="InterPro" id="IPR016909">
    <property type="entry name" value="rRNA_lsu_MeTfrase_F"/>
</dbReference>
<dbReference type="InterPro" id="IPR029063">
    <property type="entry name" value="SAM-dependent_MTases_sf"/>
</dbReference>
<dbReference type="NCBIfam" id="NF008725">
    <property type="entry name" value="PRK11727.1"/>
    <property type="match status" value="1"/>
</dbReference>
<dbReference type="PANTHER" id="PTHR13393:SF0">
    <property type="entry name" value="RNA N6-ADENOSINE-METHYLTRANSFERASE METTL16"/>
    <property type="match status" value="1"/>
</dbReference>
<dbReference type="PANTHER" id="PTHR13393">
    <property type="entry name" value="SAM-DEPENDENT METHYLTRANSFERASE"/>
    <property type="match status" value="1"/>
</dbReference>
<dbReference type="Pfam" id="PF05971">
    <property type="entry name" value="Methyltransf_10"/>
    <property type="match status" value="1"/>
</dbReference>
<dbReference type="PIRSF" id="PIRSF029038">
    <property type="entry name" value="Mtase_YbiN_prd"/>
    <property type="match status" value="1"/>
</dbReference>
<dbReference type="SUPFAM" id="SSF53335">
    <property type="entry name" value="S-adenosyl-L-methionine-dependent methyltransferases"/>
    <property type="match status" value="1"/>
</dbReference>
<feature type="chain" id="PRO_0000349977" description="Ribosomal RNA large subunit methyltransferase F">
    <location>
        <begin position="1"/>
        <end position="375"/>
    </location>
</feature>
<feature type="region of interest" description="Disordered" evidence="2">
    <location>
        <begin position="1"/>
        <end position="39"/>
    </location>
</feature>
<feature type="region of interest" description="Disordered" evidence="2">
    <location>
        <begin position="262"/>
        <end position="281"/>
    </location>
</feature>
<feature type="compositionally biased region" description="Basic residues" evidence="2">
    <location>
        <begin position="27"/>
        <end position="38"/>
    </location>
</feature>